<name>FBX5A_XENLA</name>
<dbReference type="EMBL" id="AF319594">
    <property type="protein sequence ID" value="AAK62272.1"/>
    <property type="molecule type" value="mRNA"/>
</dbReference>
<dbReference type="EMBL" id="BC088910">
    <property type="protein sequence ID" value="AAH88910.1"/>
    <property type="molecule type" value="mRNA"/>
</dbReference>
<dbReference type="RefSeq" id="NP_001082122.1">
    <property type="nucleotide sequence ID" value="NM_001088653.1"/>
</dbReference>
<dbReference type="SMR" id="Q90Z80"/>
<dbReference type="ELM" id="Q90Z80"/>
<dbReference type="IntAct" id="Q90Z80">
    <property type="interactions" value="3"/>
</dbReference>
<dbReference type="MINT" id="Q90Z80"/>
<dbReference type="DNASU" id="398237"/>
<dbReference type="GeneID" id="398237"/>
<dbReference type="KEGG" id="xla:398237"/>
<dbReference type="AGR" id="Xenbase:XB-GENE-953951"/>
<dbReference type="CTD" id="398237"/>
<dbReference type="Xenbase" id="XB-GENE-953951">
    <property type="gene designation" value="fbxo5.S"/>
</dbReference>
<dbReference type="OMA" id="CLHRAIC"/>
<dbReference type="OrthoDB" id="9984940at2759"/>
<dbReference type="UniPathway" id="UPA00143"/>
<dbReference type="Proteomes" id="UP000186698">
    <property type="component" value="Chromosome 5S"/>
</dbReference>
<dbReference type="Bgee" id="398237">
    <property type="expression patterns" value="Expressed in egg cell and 12 other cell types or tissues"/>
</dbReference>
<dbReference type="GO" id="GO:0005813">
    <property type="term" value="C:centrosome"/>
    <property type="evidence" value="ECO:0007669"/>
    <property type="project" value="UniProtKB-SubCell"/>
</dbReference>
<dbReference type="GO" id="GO:0005737">
    <property type="term" value="C:cytoplasm"/>
    <property type="evidence" value="ECO:0000314"/>
    <property type="project" value="UniProtKB"/>
</dbReference>
<dbReference type="GO" id="GO:0005634">
    <property type="term" value="C:nucleus"/>
    <property type="evidence" value="ECO:0000314"/>
    <property type="project" value="UniProtKB"/>
</dbReference>
<dbReference type="GO" id="GO:0005819">
    <property type="term" value="C:spindle"/>
    <property type="evidence" value="ECO:0000314"/>
    <property type="project" value="UniProtKB"/>
</dbReference>
<dbReference type="GO" id="GO:1990948">
    <property type="term" value="F:ubiquitin ligase inhibitor activity"/>
    <property type="evidence" value="ECO:0000250"/>
    <property type="project" value="UniProtKB"/>
</dbReference>
<dbReference type="GO" id="GO:0008270">
    <property type="term" value="F:zinc ion binding"/>
    <property type="evidence" value="ECO:0007669"/>
    <property type="project" value="UniProtKB-KW"/>
</dbReference>
<dbReference type="GO" id="GO:0051301">
    <property type="term" value="P:cell division"/>
    <property type="evidence" value="ECO:0007669"/>
    <property type="project" value="UniProtKB-KW"/>
</dbReference>
<dbReference type="GO" id="GO:0106061">
    <property type="term" value="P:negative regulation of exit from meiosis"/>
    <property type="evidence" value="ECO:0000315"/>
    <property type="project" value="UniProtKB"/>
</dbReference>
<dbReference type="GO" id="GO:0045835">
    <property type="term" value="P:negative regulation of meiotic nuclear division"/>
    <property type="evidence" value="ECO:0000318"/>
    <property type="project" value="GO_Central"/>
</dbReference>
<dbReference type="GO" id="GO:0045841">
    <property type="term" value="P:negative regulation of mitotic metaphase/anaphase transition"/>
    <property type="evidence" value="ECO:0000314"/>
    <property type="project" value="UniProtKB"/>
</dbReference>
<dbReference type="GO" id="GO:1904667">
    <property type="term" value="P:negative regulation of ubiquitin protein ligase activity"/>
    <property type="evidence" value="ECO:0000314"/>
    <property type="project" value="UniProtKB"/>
</dbReference>
<dbReference type="GO" id="GO:0016567">
    <property type="term" value="P:protein ubiquitination"/>
    <property type="evidence" value="ECO:0007669"/>
    <property type="project" value="UniProtKB-UniPathway"/>
</dbReference>
<dbReference type="GO" id="GO:0051726">
    <property type="term" value="P:regulation of cell cycle"/>
    <property type="evidence" value="ECO:0000314"/>
    <property type="project" value="UniProtKB"/>
</dbReference>
<dbReference type="GO" id="GO:0007088">
    <property type="term" value="P:regulation of mitotic nuclear division"/>
    <property type="evidence" value="ECO:0000318"/>
    <property type="project" value="GO_Central"/>
</dbReference>
<dbReference type="CDD" id="cd20364">
    <property type="entry name" value="BRcat_RBR_FBXO5"/>
    <property type="match status" value="1"/>
</dbReference>
<dbReference type="CDD" id="cd22170">
    <property type="entry name" value="F-box_FBXO5"/>
    <property type="match status" value="1"/>
</dbReference>
<dbReference type="FunFam" id="2.20.25.20:FF:000006">
    <property type="entry name" value="F-box only protein 5"/>
    <property type="match status" value="1"/>
</dbReference>
<dbReference type="Gene3D" id="2.20.25.20">
    <property type="match status" value="1"/>
</dbReference>
<dbReference type="InterPro" id="IPR036047">
    <property type="entry name" value="F-box-like_dom_sf"/>
</dbReference>
<dbReference type="InterPro" id="IPR001810">
    <property type="entry name" value="F-box_dom"/>
</dbReference>
<dbReference type="InterPro" id="IPR047147">
    <property type="entry name" value="FBX5_43"/>
</dbReference>
<dbReference type="InterPro" id="IPR044064">
    <property type="entry name" value="ZF_ZBR"/>
</dbReference>
<dbReference type="PANTHER" id="PTHR15493:SF8">
    <property type="entry name" value="F-BOX ONLY PROTEIN 5"/>
    <property type="match status" value="1"/>
</dbReference>
<dbReference type="PANTHER" id="PTHR15493">
    <property type="entry name" value="F-BOX ONLY PROTEIN 5 AND 43"/>
    <property type="match status" value="1"/>
</dbReference>
<dbReference type="Pfam" id="PF00646">
    <property type="entry name" value="F-box"/>
    <property type="match status" value="1"/>
</dbReference>
<dbReference type="SUPFAM" id="SSF81383">
    <property type="entry name" value="F-box domain"/>
    <property type="match status" value="1"/>
</dbReference>
<dbReference type="PROSITE" id="PS51872">
    <property type="entry name" value="ZF_ZBR"/>
    <property type="match status" value="1"/>
</dbReference>
<feature type="chain" id="PRO_0000258010" description="F-box only protein 5-A">
    <location>
        <begin position="1"/>
        <end position="392"/>
    </location>
</feature>
<feature type="domain" description="F-box" evidence="2">
    <location>
        <begin position="197"/>
        <end position="244"/>
    </location>
</feature>
<feature type="zinc finger region" description="ZBR-type" evidence="3">
    <location>
        <begin position="319"/>
        <end position="367"/>
    </location>
</feature>
<feature type="region of interest" description="Disordered" evidence="4">
    <location>
        <begin position="1"/>
        <end position="21"/>
    </location>
</feature>
<feature type="compositionally biased region" description="Low complexity" evidence="4">
    <location>
        <begin position="7"/>
        <end position="20"/>
    </location>
</feature>
<feature type="binding site" evidence="3">
    <location>
        <position position="323"/>
    </location>
    <ligand>
        <name>Zn(2+)</name>
        <dbReference type="ChEBI" id="CHEBI:29105"/>
        <label>1</label>
    </ligand>
</feature>
<feature type="binding site" evidence="3">
    <location>
        <position position="326"/>
    </location>
    <ligand>
        <name>Zn(2+)</name>
        <dbReference type="ChEBI" id="CHEBI:29105"/>
        <label>1</label>
    </ligand>
</feature>
<feature type="binding site" evidence="3">
    <location>
        <position position="341"/>
    </location>
    <ligand>
        <name>Zn(2+)</name>
        <dbReference type="ChEBI" id="CHEBI:29105"/>
        <label>1</label>
    </ligand>
</feature>
<feature type="binding site" evidence="3">
    <location>
        <position position="346"/>
    </location>
    <ligand>
        <name>Zn(2+)</name>
        <dbReference type="ChEBI" id="CHEBI:29105"/>
        <label>1</label>
    </ligand>
</feature>
<feature type="binding site" evidence="3">
    <location>
        <position position="351"/>
    </location>
    <ligand>
        <name>Zn(2+)</name>
        <dbReference type="ChEBI" id="CHEBI:29105"/>
        <label>2</label>
    </ligand>
</feature>
<feature type="binding site" evidence="3">
    <location>
        <position position="354"/>
    </location>
    <ligand>
        <name>Zn(2+)</name>
        <dbReference type="ChEBI" id="CHEBI:29105"/>
        <label>2</label>
    </ligand>
</feature>
<feature type="binding site" evidence="3">
    <location>
        <position position="359"/>
    </location>
    <ligand>
        <name>Zn(2+)</name>
        <dbReference type="ChEBI" id="CHEBI:29105"/>
        <label>2</label>
    </ligand>
</feature>
<feature type="binding site" evidence="3">
    <location>
        <position position="364"/>
    </location>
    <ligand>
        <name>Zn(2+)</name>
        <dbReference type="ChEBI" id="CHEBI:29105"/>
        <label>2</label>
    </ligand>
</feature>
<feature type="mutagenesis site" description="Not mitotically degraded; when associated with A-29; A-105; A-123 and A-328. Does not affect fbxo5 proteolysis. Impairs pin1 interaction. Impairs pin1 interaction; when associated with A-29. Impairs pin1 interaction; when associated with A-29 and A-105. Impairs pin1 interaction; when associated with A-29; A-105 and A-123. Impairs pin1 interaction; when associated with A-29; A-105; A-123 and A-328. Proteolysated in the presence of Pin1. Degraded at G2 phase." evidence="5 9">
    <original>S</original>
    <variation>A</variation>
    <location>
        <position position="10"/>
    </location>
</feature>
<feature type="mutagenesis site" description="Not mitotically degraded; when associated with A-10; A-105; A-123 and A-328. Delays fbxo5 proteolysis. Does not affect pin1 interaction. Impairs pin1 interaction; when associated with A-10. Impairs pin1 interaction; when associated with A-10 and A-105. Impairs pin1 interaction; when associated with A-10; A-105 and A-123. Impairs pin1 interaction; when associated with A-10; A-105; A-123 and A-328." evidence="5 9">
    <original>S</original>
    <variation>A</variation>
    <location>
        <position position="29"/>
    </location>
</feature>
<feature type="mutagenesis site" description="Does not affect protein expression in meiosis II; when associated with A-99. Does not affect protein expression in entered M phase; when associated with A-99. Mostly inhibits the degradation of cyclin B at the meiosis I exit, maintains cdk1 activity at a high level, and arrests meiosis I at metaphase; when associated with A-99." evidence="8">
    <original>S</original>
    <variation>A</variation>
    <location>
        <position position="95"/>
    </location>
</feature>
<feature type="mutagenesis site" description="Does not affect protein expression in meiosis II; when associated with A-95. Does not affect protein expression in entered M phase; when associated with A-95. Mostly inhibits the degradation of cyclin B at the meiosis I exit, maintains cdk1 activity at a high level, and arrests meiosis I at metaphase; when associated with A-95." evidence="8">
    <original>S</original>
    <variation>A</variation>
    <location>
        <position position="99"/>
    </location>
</feature>
<feature type="mutagenesis site" description="Not mitotically degraded; when associated with A-10; A-29; A-123 and A-328. Does not affect fbxo5 proteolysis. Does not affect pin1 interaction. Impairs pin1 interaction; when associated with A-10 and A-29. Impairs pin1 interaction; when associated with A-10; A-29 and A-123. Impairs pin1 interaction; when associated with A-10; A-29; A-123 and A-328." evidence="5 9">
    <original>S</original>
    <variation>A</variation>
    <location>
        <position position="105"/>
    </location>
</feature>
<feature type="mutagenesis site" description="Not mitotically degraded; when associated with A-10; A-29; A-105 and A-328. Delays fbxo5 proteolysis. Does not affect pin1 interaction. Impairs pin1 interaction; when associated with A-10; A-29 and A-105. Impairs pin1 interaction; when associated with A-10; A-29; A-105 and A-328." evidence="5 9">
    <original>T</original>
    <variation>A</variation>
    <location>
        <position position="123"/>
    </location>
</feature>
<feature type="mutagenesis site" description="Abolishes binding to skp1." evidence="5">
    <original>EL</original>
    <variation>AA</variation>
    <location>
        <begin position="198"/>
        <end position="199"/>
    </location>
</feature>
<feature type="mutagenesis site" description="Not mitotically degraded; when associated with A-10; A-29; A-105 and A-123. Does not affect fbxo5 proteolysis. Does not affect pin1 interaction. Impairs pin1 interaction; when associated with A-10; A-29; A-105 and A-123." evidence="5 9">
    <original>S</original>
    <variation>A</variation>
    <location>
        <position position="328"/>
    </location>
</feature>
<feature type="mutagenesis site" description="Does not inhibit APC." evidence="5">
    <original>C</original>
    <variation>S</variation>
    <location>
        <position position="341"/>
    </location>
</feature>
<feature type="mutagenesis site" description="Does not inhibit APC." evidence="5">
    <original>C</original>
    <variation>S</variation>
    <location>
        <position position="346"/>
    </location>
</feature>
<feature type="mutagenesis site" description="Does not inhibit APC." evidence="5">
    <original>C</original>
    <variation>S</variation>
    <location>
        <position position="351"/>
    </location>
</feature>
<feature type="mutagenesis site" description="Does not inhibit APC; when associated with S-356." evidence="5">
    <original>C</original>
    <variation>S</variation>
    <location>
        <position position="354"/>
    </location>
</feature>
<feature type="mutagenesis site" description="Does not inhibit APC; when associated with S-354." evidence="5">
    <original>C</original>
    <variation>S</variation>
    <location>
        <position position="356"/>
    </location>
</feature>
<feature type="mutagenesis site" description="Does not inhibit APC." evidence="5">
    <original>C</original>
    <variation>S</variation>
    <location>
        <position position="364"/>
    </location>
</feature>
<sequence>MMCGFASNQSPKKLSSKKSSATNVHLEISPVKHHPPCKVYENVQGSCLDSAICTTVAKCADLTDDLPVHNKENLLHRLNDLETNSYEEYSALQDSGYSSILQNDSPCQDETDRKVSDIQVRETPKNFMSYQRPFHTLSKINLPILRFEEAVCSTLKKMRKTNKKIDWNAVDVVCGGNYGLEHLIGKSMGLERFDILAELFHRDFKHLLTKILRHLSAMDLINVISVSTTWRKLLQKDNWAYNAYKLGCKELCEKRAKVSSHTATRDESLCRVPLASVQKVAASSLCTSKKQSKNKNGGLSCNRLAEFIEVAQTLKNDQSLKVCVDCGSPAKHDPCLHRAICTRESCKLDFCTRCSCKYHFSKSCLMSKPGSYRIPSEPLPGSKKSKQNLRRL</sequence>
<keyword id="KW-0131">Cell cycle</keyword>
<keyword id="KW-0132">Cell division</keyword>
<keyword id="KW-0963">Cytoplasm</keyword>
<keyword id="KW-0206">Cytoskeleton</keyword>
<keyword id="KW-0479">Metal-binding</keyword>
<keyword id="KW-0498">Mitosis</keyword>
<keyword id="KW-0539">Nucleus</keyword>
<keyword id="KW-1185">Reference proteome</keyword>
<keyword id="KW-0833">Ubl conjugation pathway</keyword>
<keyword id="KW-0862">Zinc</keyword>
<keyword id="KW-0863">Zinc-finger</keyword>
<accession>Q90Z80</accession>
<proteinExistence type="evidence at protein level"/>
<comment type="function">
    <text evidence="5 6 7 8">Regulates progression through early mitosis by inhibiting the anaphase promoting complex/cyclosome (APC) (PubMed:15314241). Binds to the APC activator cdc20 to prevent APC activation (PubMed:11389834). Can also bind directly to the APC to inhibit substrate-binding (PubMed:11751633). Required to arrest unfertilized eggs at metaphase of meiosis II, by preventing their release from metaphase of meiosis II, through inhibition of APC-dependent cyclin B destruction leading to stabilization of cyclin B-cdk1 complex activity (PubMed:11976684).</text>
</comment>
<comment type="pathway">
    <text>Protein modification; protein ubiquitination.</text>
</comment>
<comment type="subunit">
    <text evidence="1 5 7 9">Part of a SCF (SKP1-cullin-F-box) protein ligase complex (By similarity). Interacts with btrc (PubMed:17159919). Interacts with skp1 (PubMed:11389834). Interacts with cdc20 (PubMed:11389834, PubMed:11976684). Interacts with pin1; stabilizes fbxo5 by preventing its association with btrc in an isomerization-dependent pathway; this interaction is present during G2 phase and prevents fbxo5 degradation (PubMed:17159919). Interacts with plk1 (PubMed:17159919).</text>
</comment>
<comment type="interaction">
    <interactant intactId="EBI-7161111">
        <id>Q90Z80</id>
    </interactant>
    <interactant intactId="EBI-959114">
        <id>Q9I9K6</id>
        <label>pin1.L</label>
    </interactant>
    <organismsDiffer>false</organismsDiffer>
    <experiments>3</experiments>
</comment>
<comment type="interaction">
    <interactant intactId="EBI-7161111">
        <id>Q90Z80</id>
    </interactant>
    <interactant intactId="EBI-3511304">
        <id>P70032</id>
        <label>plk1</label>
    </interactant>
    <organismsDiffer>false</organismsDiffer>
    <experiments>2</experiments>
</comment>
<comment type="subcellular location">
    <subcellularLocation>
        <location evidence="5 9">Nucleus</location>
    </subcellularLocation>
    <subcellularLocation>
        <location evidence="5 9">Cytoplasm</location>
    </subcellularLocation>
    <subcellularLocation>
        <location evidence="5">Cytoplasm</location>
        <location evidence="5">Cytoskeleton</location>
        <location evidence="5">Spindle</location>
    </subcellularLocation>
    <subcellularLocation>
        <location evidence="9">Cytoplasm</location>
        <location evidence="9">Cytoskeleton</location>
        <location evidence="9">Microtubule organizing center</location>
        <location evidence="9">Centrosome</location>
    </subcellularLocation>
    <text evidence="5 9">In interphase, localizes in a punctate manner in the nucleus and cytoplasm with some perinuclear concentration (PubMed:11389834, PubMed:17159919). In mitotic cells, localizes throughout the cell, particularly at the spindle (PubMed:11389834). At metaphase, localized at mitotic centrosomes. Decreases centrosome localization as cells progressed through telophase (PubMed:17159919).</text>
</comment>
<comment type="developmental stage">
    <text evidence="5 8 9">Accumulates before mitosis with levels increasing in S phase and decreasing in M phase (PubMed:11389834). Weakly detected in cycling egg at the stage just before entry into M phase, but not detected in immature (stage VI), metaphase-I and metaphase-II oocytes, and cycling egg that has entered in M phase. Destroyed at every M phase during both meiotic cycles and during cleavage cycles (PubMed:15314241). Decreases at metaphase and completely disappears as cells exited mitosis. First observed at 4 hours (S phase) reaching a peak at 7 hours (G2 phase), and then a subsequent decrease from 9 to 10 hours corresponding to early and late M phases, respectively (PubMed:17159919).</text>
</comment>
<comment type="induction">
    <text evidence="8">Expression is first activated after the gastrula stage of development.</text>
</comment>
<comment type="domain">
    <text evidence="5">The C-terminal region is required for APC inhibition.</text>
</comment>
<comment type="PTM">
    <text evidence="9">Proteolysed; proteolysis is induced by both cyclin B-cdk1 and cyclin A-cdk1/2 complex through probable phosphorylation. Proteolysis is inhibited by pin1 during G2.</text>
</comment>
<gene>
    <name type="primary">fbxo5-a</name>
    <name type="synonym">emi1-a</name>
</gene>
<organism>
    <name type="scientific">Xenopus laevis</name>
    <name type="common">African clawed frog</name>
    <dbReference type="NCBI Taxonomy" id="8355"/>
    <lineage>
        <taxon>Eukaryota</taxon>
        <taxon>Metazoa</taxon>
        <taxon>Chordata</taxon>
        <taxon>Craniata</taxon>
        <taxon>Vertebrata</taxon>
        <taxon>Euteleostomi</taxon>
        <taxon>Amphibia</taxon>
        <taxon>Batrachia</taxon>
        <taxon>Anura</taxon>
        <taxon>Pipoidea</taxon>
        <taxon>Pipidae</taxon>
        <taxon>Xenopodinae</taxon>
        <taxon>Xenopus</taxon>
        <taxon>Xenopus</taxon>
    </lineage>
</organism>
<protein>
    <recommendedName>
        <fullName evidence="10">F-box only protein 5-A</fullName>
    </recommendedName>
    <alternativeName>
        <fullName>Early mitotic inhibitor 1-A</fullName>
    </alternativeName>
</protein>
<evidence type="ECO:0000250" key="1">
    <source>
        <dbReference type="UniProtKB" id="Q9UKT4"/>
    </source>
</evidence>
<evidence type="ECO:0000255" key="2"/>
<evidence type="ECO:0000255" key="3">
    <source>
        <dbReference type="PROSITE-ProRule" id="PRU01220"/>
    </source>
</evidence>
<evidence type="ECO:0000256" key="4">
    <source>
        <dbReference type="SAM" id="MobiDB-lite"/>
    </source>
</evidence>
<evidence type="ECO:0000269" key="5">
    <source>
    </source>
</evidence>
<evidence type="ECO:0000269" key="6">
    <source>
    </source>
</evidence>
<evidence type="ECO:0000269" key="7">
    <source>
    </source>
</evidence>
<evidence type="ECO:0000269" key="8">
    <source>
    </source>
</evidence>
<evidence type="ECO:0000269" key="9">
    <source>
    </source>
</evidence>
<evidence type="ECO:0000305" key="10"/>
<evidence type="ECO:0000312" key="11">
    <source>
        <dbReference type="EMBL" id="AAH88910.1"/>
    </source>
</evidence>
<evidence type="ECO:0000312" key="12">
    <source>
        <dbReference type="EMBL" id="AAK62272.1"/>
    </source>
</evidence>
<reference evidence="10 12" key="1">
    <citation type="journal article" date="2001" name="Cell">
        <title>EMI1 is a mitotic regulator that interacts with Cdc20 and inhibits the anaphase-promoting complex.</title>
        <authorList>
            <person name="Reimann J.D.R."/>
            <person name="Freed E."/>
            <person name="Hsu J.Y."/>
            <person name="Kramer E.R."/>
            <person name="Peters J.-M."/>
            <person name="Jackson P.K."/>
        </authorList>
    </citation>
    <scope>NUCLEOTIDE SEQUENCE [MRNA]</scope>
    <scope>FUNCTION</scope>
    <scope>INTERACTION WITH CDC20 AND SKP1; SUBCELLULAR LOCATION</scope>
    <scope>DEVELOPMENTAL STAGE</scope>
    <scope>MUTAGENESIS OF SER-10; SER-29; SER-105; THR-123; 198-GLU-LEU-199; SER-328; CYS-341; CYS-346; CYS-351; CYS-354; CYS-356 AND CYS-364</scope>
    <scope>DOMAIN</scope>
</reference>
<reference evidence="11" key="2">
    <citation type="submission" date="2005-01" db="EMBL/GenBank/DDBJ databases">
        <authorList>
            <consortium name="NIH - Xenopus Gene Collection (XGC) project"/>
        </authorList>
    </citation>
    <scope>NUCLEOTIDE SEQUENCE [LARGE SCALE MRNA]</scope>
    <source>
        <tissue evidence="11">Egg</tissue>
    </source>
</reference>
<reference evidence="10" key="3">
    <citation type="journal article" date="2001" name="Genes Dev.">
        <title>Emi1 regulates the anaphase-promoting complex by a different mechanism than Mad2 proteins.</title>
        <authorList>
            <person name="Reimann J.D.R."/>
            <person name="Gardner B.E."/>
            <person name="Margottin-Goguet F."/>
            <person name="Jackson P.K."/>
        </authorList>
    </citation>
    <scope>FUNCTION</scope>
</reference>
<reference key="4">
    <citation type="journal article" date="2002" name="Nature">
        <title>Emi1 is required for cytostatic factor arrest in vertebrate eggs.</title>
        <authorList>
            <person name="Reimann J.D."/>
            <person name="Jackson P.K."/>
        </authorList>
    </citation>
    <scope>INTERACTION WITH CDC20</scope>
    <scope>FUNCTION</scope>
</reference>
<reference key="5">
    <citation type="journal article" date="2004" name="Proc. Natl. Acad. Sci. U.S.A.">
        <title>Emi1-mediated M-phase arrest in Xenopus eggs is distinct from cytostatic factor arrest.</title>
        <authorList>
            <person name="Ohsumi K."/>
            <person name="Koyanagi A."/>
            <person name="Yamamoto T.M."/>
            <person name="Gotoh T."/>
            <person name="Kishimoto T."/>
        </authorList>
    </citation>
    <scope>INDUCTION</scope>
    <scope>DEVELOPMENTAL STAGE</scope>
    <scope>FUNCTION</scope>
    <scope>MUTAGENESIS OF SER-95 AND SER-99</scope>
</reference>
<reference key="6">
    <citation type="journal article" date="2007" name="EMBO Rep.">
        <title>Pin1 stabilizes Emi1 during G2 phase by preventing its association with SCF(betatrcp).</title>
        <authorList>
            <person name="Bernis C."/>
            <person name="Vigneron S."/>
            <person name="Burgess A."/>
            <person name="Labbe J.C."/>
            <person name="Fesquet D."/>
            <person name="Castro A."/>
            <person name="Lorca T."/>
        </authorList>
    </citation>
    <scope>MUTAGENESIS OF SER-10; SER-29; SER-105; THR-123 AND SER-328</scope>
    <scope>PROTEOLYSIS</scope>
    <scope>INTERACTION WITH PIN1; BTRC AND PLK1</scope>
    <scope>SUBCELLULAR LOCATION</scope>
    <scope>DEVELOPMENTAL STAGE</scope>
</reference>